<evidence type="ECO:0000255" key="1">
    <source>
        <dbReference type="HAMAP-Rule" id="MF_01382"/>
    </source>
</evidence>
<evidence type="ECO:0000256" key="2">
    <source>
        <dbReference type="SAM" id="MobiDB-lite"/>
    </source>
</evidence>
<name>SECA_BDEBA</name>
<organism>
    <name type="scientific">Bdellovibrio bacteriovorus (strain ATCC 15356 / DSM 50701 / NCIMB 9529 / HD100)</name>
    <dbReference type="NCBI Taxonomy" id="264462"/>
    <lineage>
        <taxon>Bacteria</taxon>
        <taxon>Pseudomonadati</taxon>
        <taxon>Bdellovibrionota</taxon>
        <taxon>Bdellovibrionia</taxon>
        <taxon>Bdellovibrionales</taxon>
        <taxon>Pseudobdellovibrionaceae</taxon>
        <taxon>Bdellovibrio</taxon>
    </lineage>
</organism>
<reference key="1">
    <citation type="journal article" date="2004" name="Science">
        <title>A predator unmasked: life cycle of Bdellovibrio bacteriovorus from a genomic perspective.</title>
        <authorList>
            <person name="Rendulic S."/>
            <person name="Jagtap P."/>
            <person name="Rosinus A."/>
            <person name="Eppinger M."/>
            <person name="Baar C."/>
            <person name="Lanz C."/>
            <person name="Keller H."/>
            <person name="Lambert C."/>
            <person name="Evans K.J."/>
            <person name="Goesmann A."/>
            <person name="Meyer F."/>
            <person name="Sockett R.E."/>
            <person name="Schuster S.C."/>
        </authorList>
    </citation>
    <scope>NUCLEOTIDE SEQUENCE [LARGE SCALE GENOMIC DNA]</scope>
    <source>
        <strain>ATCC 15356 / DSM 50701 / NCIMB 9529 / HD100</strain>
    </source>
</reference>
<dbReference type="EC" id="7.4.2.8" evidence="1"/>
<dbReference type="EMBL" id="BX842646">
    <property type="protein sequence ID" value="CAE77929.1"/>
    <property type="molecule type" value="Genomic_DNA"/>
</dbReference>
<dbReference type="RefSeq" id="WP_011162870.1">
    <property type="nucleotide sequence ID" value="NC_005363.1"/>
</dbReference>
<dbReference type="SMR" id="Q6MR29"/>
<dbReference type="STRING" id="264462.Bd0272"/>
<dbReference type="TCDB" id="3.A.5.1.3">
    <property type="family name" value="the general secretory pathway (sec) family"/>
</dbReference>
<dbReference type="GeneID" id="93011405"/>
<dbReference type="KEGG" id="bba:Bd0272"/>
<dbReference type="eggNOG" id="COG0653">
    <property type="taxonomic scope" value="Bacteria"/>
</dbReference>
<dbReference type="HOGENOM" id="CLU_005314_3_0_7"/>
<dbReference type="Proteomes" id="UP000008080">
    <property type="component" value="Chromosome"/>
</dbReference>
<dbReference type="GO" id="GO:0031522">
    <property type="term" value="C:cell envelope Sec protein transport complex"/>
    <property type="evidence" value="ECO:0007669"/>
    <property type="project" value="TreeGrafter"/>
</dbReference>
<dbReference type="GO" id="GO:0005829">
    <property type="term" value="C:cytosol"/>
    <property type="evidence" value="ECO:0007669"/>
    <property type="project" value="TreeGrafter"/>
</dbReference>
<dbReference type="GO" id="GO:0005886">
    <property type="term" value="C:plasma membrane"/>
    <property type="evidence" value="ECO:0007669"/>
    <property type="project" value="UniProtKB-SubCell"/>
</dbReference>
<dbReference type="GO" id="GO:0005524">
    <property type="term" value="F:ATP binding"/>
    <property type="evidence" value="ECO:0007669"/>
    <property type="project" value="UniProtKB-UniRule"/>
</dbReference>
<dbReference type="GO" id="GO:0008564">
    <property type="term" value="F:protein-exporting ATPase activity"/>
    <property type="evidence" value="ECO:0007669"/>
    <property type="project" value="UniProtKB-EC"/>
</dbReference>
<dbReference type="GO" id="GO:0065002">
    <property type="term" value="P:intracellular protein transmembrane transport"/>
    <property type="evidence" value="ECO:0007669"/>
    <property type="project" value="UniProtKB-UniRule"/>
</dbReference>
<dbReference type="GO" id="GO:0017038">
    <property type="term" value="P:protein import"/>
    <property type="evidence" value="ECO:0007669"/>
    <property type="project" value="InterPro"/>
</dbReference>
<dbReference type="GO" id="GO:0006605">
    <property type="term" value="P:protein targeting"/>
    <property type="evidence" value="ECO:0007669"/>
    <property type="project" value="UniProtKB-UniRule"/>
</dbReference>
<dbReference type="GO" id="GO:0043952">
    <property type="term" value="P:protein transport by the Sec complex"/>
    <property type="evidence" value="ECO:0007669"/>
    <property type="project" value="TreeGrafter"/>
</dbReference>
<dbReference type="CDD" id="cd17928">
    <property type="entry name" value="DEXDc_SecA"/>
    <property type="match status" value="1"/>
</dbReference>
<dbReference type="CDD" id="cd18803">
    <property type="entry name" value="SF2_C_secA"/>
    <property type="match status" value="1"/>
</dbReference>
<dbReference type="FunFam" id="3.40.50.300:FF:000113">
    <property type="entry name" value="Preprotein translocase subunit SecA"/>
    <property type="match status" value="1"/>
</dbReference>
<dbReference type="FunFam" id="3.90.1440.10:FF:000001">
    <property type="entry name" value="Preprotein translocase subunit SecA"/>
    <property type="match status" value="1"/>
</dbReference>
<dbReference type="FunFam" id="3.40.50.300:FF:000334">
    <property type="entry name" value="Protein translocase subunit SecA"/>
    <property type="match status" value="1"/>
</dbReference>
<dbReference type="Gene3D" id="1.10.3060.10">
    <property type="entry name" value="Helical scaffold and wing domains of SecA"/>
    <property type="match status" value="1"/>
</dbReference>
<dbReference type="Gene3D" id="3.40.50.300">
    <property type="entry name" value="P-loop containing nucleotide triphosphate hydrolases"/>
    <property type="match status" value="2"/>
</dbReference>
<dbReference type="Gene3D" id="3.90.1440.10">
    <property type="entry name" value="SecA, preprotein cross-linking domain"/>
    <property type="match status" value="1"/>
</dbReference>
<dbReference type="HAMAP" id="MF_01382">
    <property type="entry name" value="SecA"/>
    <property type="match status" value="1"/>
</dbReference>
<dbReference type="InterPro" id="IPR014001">
    <property type="entry name" value="Helicase_ATP-bd"/>
</dbReference>
<dbReference type="InterPro" id="IPR001650">
    <property type="entry name" value="Helicase_C-like"/>
</dbReference>
<dbReference type="InterPro" id="IPR027417">
    <property type="entry name" value="P-loop_NTPase"/>
</dbReference>
<dbReference type="InterPro" id="IPR000185">
    <property type="entry name" value="SecA"/>
</dbReference>
<dbReference type="InterPro" id="IPR020937">
    <property type="entry name" value="SecA_CS"/>
</dbReference>
<dbReference type="InterPro" id="IPR011115">
    <property type="entry name" value="SecA_DEAD"/>
</dbReference>
<dbReference type="InterPro" id="IPR014018">
    <property type="entry name" value="SecA_motor_DEAD"/>
</dbReference>
<dbReference type="InterPro" id="IPR011130">
    <property type="entry name" value="SecA_preprotein_X-link_dom"/>
</dbReference>
<dbReference type="InterPro" id="IPR044722">
    <property type="entry name" value="SecA_SF2_C"/>
</dbReference>
<dbReference type="InterPro" id="IPR011116">
    <property type="entry name" value="SecA_Wing/Scaffold"/>
</dbReference>
<dbReference type="InterPro" id="IPR036266">
    <property type="entry name" value="SecA_Wing/Scaffold_sf"/>
</dbReference>
<dbReference type="InterPro" id="IPR036670">
    <property type="entry name" value="SecA_X-link_sf"/>
</dbReference>
<dbReference type="NCBIfam" id="NF009538">
    <property type="entry name" value="PRK12904.1"/>
    <property type="match status" value="1"/>
</dbReference>
<dbReference type="NCBIfam" id="TIGR00963">
    <property type="entry name" value="secA"/>
    <property type="match status" value="1"/>
</dbReference>
<dbReference type="PANTHER" id="PTHR30612:SF0">
    <property type="entry name" value="CHLOROPLAST PROTEIN-TRANSPORTING ATPASE"/>
    <property type="match status" value="1"/>
</dbReference>
<dbReference type="PANTHER" id="PTHR30612">
    <property type="entry name" value="SECA INNER MEMBRANE COMPONENT OF SEC PROTEIN SECRETION SYSTEM"/>
    <property type="match status" value="1"/>
</dbReference>
<dbReference type="Pfam" id="PF21090">
    <property type="entry name" value="P-loop_SecA"/>
    <property type="match status" value="1"/>
</dbReference>
<dbReference type="Pfam" id="PF07517">
    <property type="entry name" value="SecA_DEAD"/>
    <property type="match status" value="1"/>
</dbReference>
<dbReference type="Pfam" id="PF01043">
    <property type="entry name" value="SecA_PP_bind"/>
    <property type="match status" value="1"/>
</dbReference>
<dbReference type="Pfam" id="PF07516">
    <property type="entry name" value="SecA_SW"/>
    <property type="match status" value="1"/>
</dbReference>
<dbReference type="PRINTS" id="PR00906">
    <property type="entry name" value="SECA"/>
</dbReference>
<dbReference type="SMART" id="SM00957">
    <property type="entry name" value="SecA_DEAD"/>
    <property type="match status" value="1"/>
</dbReference>
<dbReference type="SMART" id="SM00958">
    <property type="entry name" value="SecA_PP_bind"/>
    <property type="match status" value="1"/>
</dbReference>
<dbReference type="SUPFAM" id="SSF81886">
    <property type="entry name" value="Helical scaffold and wing domains of SecA"/>
    <property type="match status" value="1"/>
</dbReference>
<dbReference type="SUPFAM" id="SSF52540">
    <property type="entry name" value="P-loop containing nucleoside triphosphate hydrolases"/>
    <property type="match status" value="2"/>
</dbReference>
<dbReference type="SUPFAM" id="SSF81767">
    <property type="entry name" value="Pre-protein crosslinking domain of SecA"/>
    <property type="match status" value="1"/>
</dbReference>
<dbReference type="PROSITE" id="PS01312">
    <property type="entry name" value="SECA"/>
    <property type="match status" value="1"/>
</dbReference>
<dbReference type="PROSITE" id="PS51196">
    <property type="entry name" value="SECA_MOTOR_DEAD"/>
    <property type="match status" value="1"/>
</dbReference>
<protein>
    <recommendedName>
        <fullName evidence="1">Protein translocase subunit SecA</fullName>
        <ecNumber evidence="1">7.4.2.8</ecNumber>
    </recommendedName>
</protein>
<feature type="chain" id="PRO_0000318324" description="Protein translocase subunit SecA">
    <location>
        <begin position="1"/>
        <end position="889"/>
    </location>
</feature>
<feature type="region of interest" description="Disordered" evidence="2">
    <location>
        <begin position="823"/>
        <end position="889"/>
    </location>
</feature>
<feature type="compositionally biased region" description="Basic and acidic residues" evidence="2">
    <location>
        <begin position="867"/>
        <end position="889"/>
    </location>
</feature>
<feature type="binding site" evidence="1">
    <location>
        <position position="87"/>
    </location>
    <ligand>
        <name>ATP</name>
        <dbReference type="ChEBI" id="CHEBI:30616"/>
    </ligand>
</feature>
<feature type="binding site" evidence="1">
    <location>
        <begin position="105"/>
        <end position="109"/>
    </location>
    <ligand>
        <name>ATP</name>
        <dbReference type="ChEBI" id="CHEBI:30616"/>
    </ligand>
</feature>
<feature type="binding site" evidence="1">
    <location>
        <position position="494"/>
    </location>
    <ligand>
        <name>ATP</name>
        <dbReference type="ChEBI" id="CHEBI:30616"/>
    </ligand>
</feature>
<keyword id="KW-0067">ATP-binding</keyword>
<keyword id="KW-0997">Cell inner membrane</keyword>
<keyword id="KW-1003">Cell membrane</keyword>
<keyword id="KW-0963">Cytoplasm</keyword>
<keyword id="KW-0472">Membrane</keyword>
<keyword id="KW-0547">Nucleotide-binding</keyword>
<keyword id="KW-0653">Protein transport</keyword>
<keyword id="KW-1185">Reference proteome</keyword>
<keyword id="KW-1278">Translocase</keyword>
<keyword id="KW-0811">Translocation</keyword>
<keyword id="KW-0813">Transport</keyword>
<accession>Q6MR29</accession>
<proteinExistence type="inferred from homology"/>
<comment type="function">
    <text evidence="1">Part of the Sec protein translocase complex. Interacts with the SecYEG preprotein conducting channel. Has a central role in coupling the hydrolysis of ATP to the transfer of proteins into and across the cell membrane, serving as an ATP-driven molecular motor driving the stepwise translocation of polypeptide chains across the membrane.</text>
</comment>
<comment type="catalytic activity">
    <reaction evidence="1">
        <text>ATP + H2O + cellular proteinSide 1 = ADP + phosphate + cellular proteinSide 2.</text>
        <dbReference type="EC" id="7.4.2.8"/>
    </reaction>
</comment>
<comment type="subunit">
    <text evidence="1">Monomer and homodimer. Part of the essential Sec protein translocation apparatus which comprises SecA, SecYEG and auxiliary proteins SecDF-YajC and YidC.</text>
</comment>
<comment type="subcellular location">
    <subcellularLocation>
        <location evidence="1">Cell inner membrane</location>
        <topology evidence="1">Peripheral membrane protein</topology>
        <orientation evidence="1">Cytoplasmic side</orientation>
    </subcellularLocation>
    <subcellularLocation>
        <location evidence="1">Cytoplasm</location>
    </subcellularLocation>
    <text evidence="1">Distribution is 50-50.</text>
</comment>
<comment type="similarity">
    <text evidence="1">Belongs to the SecA family.</text>
</comment>
<gene>
    <name evidence="1" type="primary">secA</name>
    <name type="ordered locus">Bd0272</name>
</gene>
<sequence length="889" mass="101164">MVTQILTKMFGTKHDREMKKIQPTVDRINALEPQMAALTDDQLKAKTPEFQERLKKGETVHDILPEAFAVCREASKRVLGMRHYDVQLIGGYVLNRGNIAEMRTGEGKTLVATLPVYLNALTGRGVHVVTVNDYLVRRDAEHMGRLYGWLGLTTGIIVHGLTDQQRKQMYACDITYCTNNELGFDYLRDNMKFDLNDYVQRPHYYAIVDECDSILVDEARTPLIISGPAESSTDKYYAVNQIIPHLKRDVHFTMEEKSKTASLTDAGNAKVEELMGLSNLYDPQNIEILHHVYQGLKAHYLYRLDVEYMIKDGEIVIVDEFTGRLMPGRRWSDGLHQAIEAKEGVEVKSENQTLATITFQNYFRMYEKLSGMTGTADTEAVEFKKIYNLEVNVIPTNRPIQRKDQEDVVYKSEKAKFKAITADIKERMAKGQPILVGTESIEKSEALSAFLRKEGVKHEVLNAKHHEREAEIIAQAGRKGAVTIATNMAGRGTDIMLGGNADMLAKAQVGNDDSPEFAEAVQKIKPQVEAERAEVRSVGGLYIIGTERHESRRIDNQLRGRSGRQGDPGESRFYLSLEDKLMRIFNGERIQKIMEMLNIPEDEPITAKMVTNAIEGAQRKVEGHNFDIRKNLMEYDSVMNAQRNAIYGMRRKVLEGQEIERTTLDWLGDVVSNLLDTHIPEGGKKEEWSLEGLNNSLAQSFGFKIDFATMAVNTETVTDAVKSGVKEVWERQKNSMGPFFEQVQKMILLQSIDHHWKNHLYVIDKLKEGISLRGYAQKDPLIEYKKEAFKAFETLNNTIKSDAIEKVMRVQLVAQQNEQEVLESLRPEEADLDELDYSSPSEADIGHSIPETSEDAPKRKMTFQSGPRDDRPMNREERRRMDKDTKGKR</sequence>